<evidence type="ECO:0000250" key="1">
    <source>
        <dbReference type="UniProtKB" id="Q7XXN8"/>
    </source>
</evidence>
<evidence type="ECO:0000255" key="2"/>
<evidence type="ECO:0000269" key="3">
    <source>
    </source>
</evidence>
<evidence type="ECO:0000303" key="4">
    <source>
    </source>
</evidence>
<evidence type="ECO:0000303" key="5">
    <source>
    </source>
</evidence>
<evidence type="ECO:0000305" key="6"/>
<evidence type="ECO:0000312" key="7">
    <source>
        <dbReference type="Araport" id="AT1G68825"/>
    </source>
</evidence>
<evidence type="ECO:0000312" key="8">
    <source>
        <dbReference type="EMBL" id="AC011665"/>
    </source>
</evidence>
<evidence type="ECO:0000312" key="9">
    <source>
        <dbReference type="EMBL" id="AC011914"/>
    </source>
</evidence>
<accession>Q6X5T8</accession>
<proteinExistence type="evidence at transcript level"/>
<gene>
    <name evidence="4" type="primary">DVL5</name>
    <name evidence="5" type="synonym">RTFL15</name>
    <name evidence="7" type="ordered locus">At1g68825</name>
    <name evidence="9" type="ORF">F14K14</name>
    <name evidence="8" type="ORF">T6L1</name>
</gene>
<reference key="1">
    <citation type="journal article" date="2004" name="Plant J.">
        <title>DVL, a novel class of small polypeptides: overexpression alters Arabidopsis development.</title>
        <authorList>
            <person name="Wen J."/>
            <person name="Lease K.A."/>
            <person name="Walker J.C."/>
        </authorList>
    </citation>
    <scope>NUCLEOTIDE SEQUENCE [MRNA]</scope>
    <scope>FUNCTION</scope>
    <scope>TISSUE SPECIFICITY</scope>
    <scope>GENE FAMILY</scope>
    <scope>NOMENCLATURE</scope>
    <source>
        <strain>cv. Columbia</strain>
    </source>
</reference>
<reference key="2">
    <citation type="journal article" date="2000" name="Nature">
        <title>Sequence and analysis of chromosome 1 of the plant Arabidopsis thaliana.</title>
        <authorList>
            <person name="Theologis A."/>
            <person name="Ecker J.R."/>
            <person name="Palm C.J."/>
            <person name="Federspiel N.A."/>
            <person name="Kaul S."/>
            <person name="White O."/>
            <person name="Alonso J."/>
            <person name="Altafi H."/>
            <person name="Araujo R."/>
            <person name="Bowman C.L."/>
            <person name="Brooks S.Y."/>
            <person name="Buehler E."/>
            <person name="Chan A."/>
            <person name="Chao Q."/>
            <person name="Chen H."/>
            <person name="Cheuk R.F."/>
            <person name="Chin C.W."/>
            <person name="Chung M.K."/>
            <person name="Conn L."/>
            <person name="Conway A.B."/>
            <person name="Conway A.R."/>
            <person name="Creasy T.H."/>
            <person name="Dewar K."/>
            <person name="Dunn P."/>
            <person name="Etgu P."/>
            <person name="Feldblyum T.V."/>
            <person name="Feng J.-D."/>
            <person name="Fong B."/>
            <person name="Fujii C.Y."/>
            <person name="Gill J.E."/>
            <person name="Goldsmith A.D."/>
            <person name="Haas B."/>
            <person name="Hansen N.F."/>
            <person name="Hughes B."/>
            <person name="Huizar L."/>
            <person name="Hunter J.L."/>
            <person name="Jenkins J."/>
            <person name="Johnson-Hopson C."/>
            <person name="Khan S."/>
            <person name="Khaykin E."/>
            <person name="Kim C.J."/>
            <person name="Koo H.L."/>
            <person name="Kremenetskaia I."/>
            <person name="Kurtz D.B."/>
            <person name="Kwan A."/>
            <person name="Lam B."/>
            <person name="Langin-Hooper S."/>
            <person name="Lee A."/>
            <person name="Lee J.M."/>
            <person name="Lenz C.A."/>
            <person name="Li J.H."/>
            <person name="Li Y.-P."/>
            <person name="Lin X."/>
            <person name="Liu S.X."/>
            <person name="Liu Z.A."/>
            <person name="Luros J.S."/>
            <person name="Maiti R."/>
            <person name="Marziali A."/>
            <person name="Militscher J."/>
            <person name="Miranda M."/>
            <person name="Nguyen M."/>
            <person name="Nierman W.C."/>
            <person name="Osborne B.I."/>
            <person name="Pai G."/>
            <person name="Peterson J."/>
            <person name="Pham P.K."/>
            <person name="Rizzo M."/>
            <person name="Rooney T."/>
            <person name="Rowley D."/>
            <person name="Sakano H."/>
            <person name="Salzberg S.L."/>
            <person name="Schwartz J.R."/>
            <person name="Shinn P."/>
            <person name="Southwick A.M."/>
            <person name="Sun H."/>
            <person name="Tallon L.J."/>
            <person name="Tambunga G."/>
            <person name="Toriumi M.J."/>
            <person name="Town C.D."/>
            <person name="Utterback T."/>
            <person name="Van Aken S."/>
            <person name="Vaysberg M."/>
            <person name="Vysotskaia V.S."/>
            <person name="Walker M."/>
            <person name="Wu D."/>
            <person name="Yu G."/>
            <person name="Fraser C.M."/>
            <person name="Venter J.C."/>
            <person name="Davis R.W."/>
        </authorList>
    </citation>
    <scope>NUCLEOTIDE SEQUENCE [LARGE SCALE GENOMIC DNA]</scope>
    <source>
        <strain>cv. Columbia</strain>
    </source>
</reference>
<reference key="3">
    <citation type="journal article" date="2017" name="Plant J.">
        <title>Araport11: a complete reannotation of the Arabidopsis thaliana reference genome.</title>
        <authorList>
            <person name="Cheng C.Y."/>
            <person name="Krishnakumar V."/>
            <person name="Chan A.P."/>
            <person name="Thibaud-Nissen F."/>
            <person name="Schobel S."/>
            <person name="Town C.D."/>
        </authorList>
    </citation>
    <scope>GENOME REANNOTATION</scope>
    <source>
        <strain>cv. Columbia</strain>
    </source>
</reference>
<reference key="4">
    <citation type="journal article" date="2004" name="Plant J.">
        <title>Overexpression of a novel small peptide ROTUNDIFOLIA4 decreases cell proliferation and alters leaf shape in Arabidopsis thaliana.</title>
        <authorList>
            <person name="Narita N.N."/>
            <person name="Moore S."/>
            <person name="Horiguchi G."/>
            <person name="Kubo M."/>
            <person name="Demura T."/>
            <person name="Fukuda H."/>
            <person name="Goodrich J."/>
            <person name="Tsukaya H."/>
        </authorList>
    </citation>
    <scope>GENE FAMILY</scope>
    <source>
        <strain>cv. Columbia</strain>
        <strain>cv. Landsberg erecta</strain>
    </source>
</reference>
<reference key="5">
    <citation type="journal article" date="2015" name="J. Plant Res.">
        <title>Comparative analysis of the RTFL peptide family on the control of plant organogenesis.</title>
        <authorList>
            <person name="Guo P."/>
            <person name="Yoshimura A."/>
            <person name="Ishikawa N."/>
            <person name="Yamaguchi T."/>
            <person name="Guo Y."/>
            <person name="Tsukaya H."/>
        </authorList>
    </citation>
    <scope>REVIEW</scope>
    <scope>GENE FAMILY</scope>
    <scope>NOMENCLATURE</scope>
    <source>
        <strain>cv. Columbia</strain>
    </source>
</reference>
<feature type="chain" id="PRO_0000452773" description="Small polypeptide DEVIL 5">
    <location>
        <begin position="1"/>
        <end position="46"/>
    </location>
</feature>
<feature type="transmembrane region" description="Helical" evidence="2">
    <location>
        <begin position="8"/>
        <end position="24"/>
    </location>
</feature>
<feature type="region of interest" description="Required for DVL/RTFL small polypeptide activity" evidence="1">
    <location>
        <begin position="15"/>
        <end position="46"/>
    </location>
</feature>
<comment type="function">
    <text evidence="3">Small polypeptide acting as a regulatory molecule which coordinates cellular responses required for differentiation, growth and development, including leaves shape, pedicule elongation, inflorescence organization and fruit maturation, probably by restricting polar cell proliferation in lateral organs and coordinating socket cell recruitment and differentiation at trichome sites.</text>
</comment>
<comment type="subcellular location">
    <subcellularLocation>
        <location evidence="1">Cell membrane</location>
        <topology evidence="2">Single-pass membrane protein</topology>
    </subcellularLocation>
</comment>
<comment type="tissue specificity">
    <text evidence="3">Mostly expressed in roots and flowers, and, to a lower extent, in leaves and stems.</text>
</comment>
<comment type="similarity">
    <text evidence="6">Belongs to the DVL/RTFL small polypeptides family.</text>
</comment>
<dbReference type="EMBL" id="AY254321">
    <property type="protein sequence ID" value="AAP13820.1"/>
    <property type="molecule type" value="mRNA"/>
</dbReference>
<dbReference type="EMBL" id="AC011665">
    <property type="status" value="NOT_ANNOTATED_CDS"/>
    <property type="molecule type" value="Genomic_DNA"/>
</dbReference>
<dbReference type="EMBL" id="AC011914">
    <property type="status" value="NOT_ANNOTATED_CDS"/>
    <property type="molecule type" value="Genomic_DNA"/>
</dbReference>
<dbReference type="EMBL" id="CP002684">
    <property type="protein sequence ID" value="AEE34844.1"/>
    <property type="molecule type" value="Genomic_DNA"/>
</dbReference>
<dbReference type="EMBL" id="CP002684">
    <property type="protein sequence ID" value="AEE34845.1"/>
    <property type="molecule type" value="Genomic_DNA"/>
</dbReference>
<dbReference type="RefSeq" id="NP_001077795.1">
    <property type="nucleotide sequence ID" value="NM_001084326.2"/>
</dbReference>
<dbReference type="RefSeq" id="NP_001154459.1">
    <property type="nucleotide sequence ID" value="NM_001160987.1"/>
</dbReference>
<dbReference type="FunCoup" id="Q6X5T8">
    <property type="interactions" value="1"/>
</dbReference>
<dbReference type="STRING" id="3702.Q6X5T8"/>
<dbReference type="PaxDb" id="3702-AT1G68825.1"/>
<dbReference type="EnsemblPlants" id="AT1G68825.1">
    <property type="protein sequence ID" value="AT1G68825.1"/>
    <property type="gene ID" value="AT1G68825"/>
</dbReference>
<dbReference type="EnsemblPlants" id="AT1G68825.2">
    <property type="protein sequence ID" value="AT1G68825.2"/>
    <property type="gene ID" value="AT1G68825"/>
</dbReference>
<dbReference type="GeneID" id="5007840"/>
<dbReference type="Gramene" id="AT1G68825.1">
    <property type="protein sequence ID" value="AT1G68825.1"/>
    <property type="gene ID" value="AT1G68825"/>
</dbReference>
<dbReference type="Gramene" id="AT1G68825.2">
    <property type="protein sequence ID" value="AT1G68825.2"/>
    <property type="gene ID" value="AT1G68825"/>
</dbReference>
<dbReference type="KEGG" id="ath:AT1G68825"/>
<dbReference type="Araport" id="AT1G68825"/>
<dbReference type="TAIR" id="AT1G68825">
    <property type="gene designation" value="RTFL15"/>
</dbReference>
<dbReference type="eggNOG" id="ENOG502SBME">
    <property type="taxonomic scope" value="Eukaryota"/>
</dbReference>
<dbReference type="HOGENOM" id="CLU_150897_5_1_1"/>
<dbReference type="InParanoid" id="Q6X5T8"/>
<dbReference type="PhylomeDB" id="Q6X5T8"/>
<dbReference type="PRO" id="PR:Q6X5T8"/>
<dbReference type="Proteomes" id="UP000006548">
    <property type="component" value="Chromosome 1"/>
</dbReference>
<dbReference type="GO" id="GO:0005886">
    <property type="term" value="C:plasma membrane"/>
    <property type="evidence" value="ECO:0000250"/>
    <property type="project" value="UniProtKB"/>
</dbReference>
<dbReference type="GO" id="GO:0008285">
    <property type="term" value="P:negative regulation of cell population proliferation"/>
    <property type="evidence" value="ECO:0000250"/>
    <property type="project" value="UniProtKB"/>
</dbReference>
<dbReference type="GO" id="GO:0048367">
    <property type="term" value="P:shoot system development"/>
    <property type="evidence" value="ECO:0000315"/>
    <property type="project" value="TAIR"/>
</dbReference>
<dbReference type="InterPro" id="IPR012552">
    <property type="entry name" value="DVL"/>
</dbReference>
<dbReference type="InterPro" id="IPR052153">
    <property type="entry name" value="DVL/RTFL_small_peptides"/>
</dbReference>
<dbReference type="PANTHER" id="PTHR47855">
    <property type="entry name" value="OS01G0525701 PROTEIN"/>
    <property type="match status" value="1"/>
</dbReference>
<dbReference type="PANTHER" id="PTHR47855:SF6">
    <property type="entry name" value="ROTUNDIFOLIA LIKE 8"/>
    <property type="match status" value="1"/>
</dbReference>
<dbReference type="Pfam" id="PF08137">
    <property type="entry name" value="DVL"/>
    <property type="match status" value="1"/>
</dbReference>
<organism>
    <name type="scientific">Arabidopsis thaliana</name>
    <name type="common">Mouse-ear cress</name>
    <dbReference type="NCBI Taxonomy" id="3702"/>
    <lineage>
        <taxon>Eukaryota</taxon>
        <taxon>Viridiplantae</taxon>
        <taxon>Streptophyta</taxon>
        <taxon>Embryophyta</taxon>
        <taxon>Tracheophyta</taxon>
        <taxon>Spermatophyta</taxon>
        <taxon>Magnoliopsida</taxon>
        <taxon>eudicotyledons</taxon>
        <taxon>Gunneridae</taxon>
        <taxon>Pentapetalae</taxon>
        <taxon>rosids</taxon>
        <taxon>malvids</taxon>
        <taxon>Brassicales</taxon>
        <taxon>Brassicaceae</taxon>
        <taxon>Camelineae</taxon>
        <taxon>Arabidopsis</taxon>
    </lineage>
</organism>
<sequence>MKTTGSSVGGTKRKMWSRGVGGVVREQKAKLYIIRRCVVMLLCWHD</sequence>
<keyword id="KW-1003">Cell membrane</keyword>
<keyword id="KW-0217">Developmental protein</keyword>
<keyword id="KW-0472">Membrane</keyword>
<keyword id="KW-1185">Reference proteome</keyword>
<keyword id="KW-0812">Transmembrane</keyword>
<keyword id="KW-1133">Transmembrane helix</keyword>
<protein>
    <recommendedName>
        <fullName evidence="4">Small polypeptide DEVIL 5</fullName>
    </recommendedName>
    <alternativeName>
        <fullName evidence="5">Small polypeptide ROTUNDIFOLIA like 15</fullName>
        <shortName evidence="5">Small polypeptide ROT-FOUR-LIKE 15</shortName>
    </alternativeName>
</protein>
<name>DVL5_ARATH</name>